<sequence>MGNYSRRRFLQGSLAIVAGNVLPCAAMAADNPPLWIPPLTSVGRGSPILLNARNVKKAFDNNKVDAWGFNGSYLGPTIKMKQNDFLRLTYRNNLSEAIAINIQGLQANGEVSGSINRNLAPNSSWSPIIQIKQSASTCWYHSDTIGRSAYQSYRGLIGMWIIEDEESKKNLLPNKYGENDIPLILQDISLNYDGQQVFNLEKNSFLGKQLFVNGQRNPFINVARGFIRLRLLNASVSRPYYLHLDNQQPFFKIASGLGFLPQPLEQKVLLLAPGERAEILVNTNQNKPLRLLAGDSANIIDKVRGWLGMSDHLQNNLVVELRPQGLASAFAQQKPTLPDAKLGLPLSPQKERHIHLSTQDAMINQRRFDPRRIDIFAQLNSVERWVLTADQATGFQLQGAKFLIEQQNGERNKKEMLAWTDTVWVEGETRILVQFDNPSSNSYPFIFGASNLLLADKGCMGLLVVQ</sequence>
<keyword id="KW-0131">Cell cycle</keyword>
<keyword id="KW-0132">Cell division</keyword>
<keyword id="KW-0574">Periplasm</keyword>
<keyword id="KW-0732">Signal</keyword>
<proteinExistence type="inferred from homology"/>
<gene>
    <name evidence="1" type="primary">ftsP</name>
    <name type="ordered locus">UMN179_00611</name>
</gene>
<dbReference type="EMBL" id="CP002667">
    <property type="protein sequence ID" value="AEC16645.1"/>
    <property type="molecule type" value="Genomic_DNA"/>
</dbReference>
<dbReference type="RefSeq" id="WP_013745432.1">
    <property type="nucleotide sequence ID" value="NC_015460.1"/>
</dbReference>
<dbReference type="SMR" id="F4HDA7"/>
<dbReference type="STRING" id="1005058.UMN179_00611"/>
<dbReference type="KEGG" id="gan:UMN179_00611"/>
<dbReference type="PATRIC" id="fig|1005058.3.peg.599"/>
<dbReference type="eggNOG" id="COG2132">
    <property type="taxonomic scope" value="Bacteria"/>
</dbReference>
<dbReference type="HOGENOM" id="CLU_009100_2_4_6"/>
<dbReference type="Proteomes" id="UP000006908">
    <property type="component" value="Chromosome"/>
</dbReference>
<dbReference type="GO" id="GO:0032153">
    <property type="term" value="C:cell division site"/>
    <property type="evidence" value="ECO:0007669"/>
    <property type="project" value="UniProtKB-UniRule"/>
</dbReference>
<dbReference type="GO" id="GO:0030288">
    <property type="term" value="C:outer membrane-bounded periplasmic space"/>
    <property type="evidence" value="ECO:0007669"/>
    <property type="project" value="UniProtKB-UniRule"/>
</dbReference>
<dbReference type="GO" id="GO:0005507">
    <property type="term" value="F:copper ion binding"/>
    <property type="evidence" value="ECO:0007669"/>
    <property type="project" value="InterPro"/>
</dbReference>
<dbReference type="GO" id="GO:0016491">
    <property type="term" value="F:oxidoreductase activity"/>
    <property type="evidence" value="ECO:0007669"/>
    <property type="project" value="InterPro"/>
</dbReference>
<dbReference type="GO" id="GO:0043093">
    <property type="term" value="P:FtsZ-dependent cytokinesis"/>
    <property type="evidence" value="ECO:0007669"/>
    <property type="project" value="UniProtKB-UniRule"/>
</dbReference>
<dbReference type="CDD" id="cd04232">
    <property type="entry name" value="CuRO_1_CueO_FtsP"/>
    <property type="match status" value="1"/>
</dbReference>
<dbReference type="CDD" id="cd13867">
    <property type="entry name" value="CuRO_2_CueO_FtsP"/>
    <property type="match status" value="1"/>
</dbReference>
<dbReference type="CDD" id="cd13890">
    <property type="entry name" value="CuRO_3_CueO_FtsP"/>
    <property type="match status" value="1"/>
</dbReference>
<dbReference type="Gene3D" id="2.60.40.420">
    <property type="entry name" value="Cupredoxins - blue copper proteins"/>
    <property type="match status" value="3"/>
</dbReference>
<dbReference type="HAMAP" id="MF_00915">
    <property type="entry name" value="FtsP"/>
    <property type="match status" value="1"/>
</dbReference>
<dbReference type="InterPro" id="IPR011707">
    <property type="entry name" value="Cu-oxidase-like_N"/>
</dbReference>
<dbReference type="InterPro" id="IPR011706">
    <property type="entry name" value="Cu-oxidase_C"/>
</dbReference>
<dbReference type="InterPro" id="IPR045087">
    <property type="entry name" value="Cu-oxidase_fam"/>
</dbReference>
<dbReference type="InterPro" id="IPR008972">
    <property type="entry name" value="Cupredoxin"/>
</dbReference>
<dbReference type="InterPro" id="IPR026589">
    <property type="entry name" value="FtsP"/>
</dbReference>
<dbReference type="InterPro" id="IPR006311">
    <property type="entry name" value="TAT_signal"/>
</dbReference>
<dbReference type="PANTHER" id="PTHR48267:SF1">
    <property type="entry name" value="BILIRUBIN OXIDASE"/>
    <property type="match status" value="1"/>
</dbReference>
<dbReference type="PANTHER" id="PTHR48267">
    <property type="entry name" value="CUPREDOXIN SUPERFAMILY PROTEIN"/>
    <property type="match status" value="1"/>
</dbReference>
<dbReference type="Pfam" id="PF07731">
    <property type="entry name" value="Cu-oxidase_2"/>
    <property type="match status" value="1"/>
</dbReference>
<dbReference type="Pfam" id="PF07732">
    <property type="entry name" value="Cu-oxidase_3"/>
    <property type="match status" value="1"/>
</dbReference>
<dbReference type="SUPFAM" id="SSF49503">
    <property type="entry name" value="Cupredoxins"/>
    <property type="match status" value="3"/>
</dbReference>
<dbReference type="PROSITE" id="PS51318">
    <property type="entry name" value="TAT"/>
    <property type="match status" value="1"/>
</dbReference>
<reference key="1">
    <citation type="journal article" date="2011" name="J. Bacteriol.">
        <title>Complete genome sequence of Gallibacterium anatis strain UMN179, isolated from a laying hen with peritonitis.</title>
        <authorList>
            <person name="Johnson T.J."/>
            <person name="Fernandez-Alarcon C."/>
            <person name="Bojesen A.M."/>
            <person name="Nolan L.K."/>
            <person name="Trampel D.W."/>
            <person name="Seemann T."/>
        </authorList>
    </citation>
    <scope>NUCLEOTIDE SEQUENCE [LARGE SCALE GENOMIC DNA]</scope>
    <source>
        <strain>UMN179</strain>
    </source>
</reference>
<accession>F4HDA7</accession>
<comment type="function">
    <text evidence="1">Cell division protein that is required for growth during stress conditions. May be involved in protecting or stabilizing the divisomal assembly under conditions of stress.</text>
</comment>
<comment type="subcellular location">
    <subcellularLocation>
        <location evidence="1">Periplasm</location>
    </subcellularLocation>
    <text evidence="1">Localizes to the division septum.</text>
</comment>
<comment type="PTM">
    <text>Predicted to be exported by the Tat system. The position of the signal peptide cleavage has not been experimentally proven.</text>
</comment>
<comment type="similarity">
    <text evidence="1">Belongs to the FtsP family.</text>
</comment>
<feature type="signal peptide" description="Tat-type signal" evidence="1">
    <location>
        <begin position="1"/>
        <end position="28"/>
    </location>
</feature>
<feature type="chain" id="PRO_0000416008" description="Cell division protein FtsP">
    <location>
        <begin position="29"/>
        <end position="466"/>
    </location>
</feature>
<name>FTSP_GALAU</name>
<protein>
    <recommendedName>
        <fullName evidence="1">Cell division protein FtsP</fullName>
    </recommendedName>
</protein>
<organism>
    <name type="scientific">Gallibacterium anatis (strain UMN179)</name>
    <name type="common">Pasteurella anatis</name>
    <dbReference type="NCBI Taxonomy" id="1005058"/>
    <lineage>
        <taxon>Bacteria</taxon>
        <taxon>Pseudomonadati</taxon>
        <taxon>Pseudomonadota</taxon>
        <taxon>Gammaproteobacteria</taxon>
        <taxon>Pasteurellales</taxon>
        <taxon>Pasteurellaceae</taxon>
        <taxon>Gallibacterium</taxon>
    </lineage>
</organism>
<evidence type="ECO:0000255" key="1">
    <source>
        <dbReference type="HAMAP-Rule" id="MF_00915"/>
    </source>
</evidence>